<keyword id="KW-0963">Cytoplasm</keyword>
<keyword id="KW-0456">Lyase</keyword>
<keyword id="KW-0670">Pyruvate</keyword>
<keyword id="KW-1185">Reference proteome</keyword>
<keyword id="KW-0831">Ubiquinone biosynthesis</keyword>
<evidence type="ECO:0000255" key="1">
    <source>
        <dbReference type="HAMAP-Rule" id="MF_01632"/>
    </source>
</evidence>
<organism>
    <name type="scientific">Escherichia coli (strain 55989 / EAEC)</name>
    <dbReference type="NCBI Taxonomy" id="585055"/>
    <lineage>
        <taxon>Bacteria</taxon>
        <taxon>Pseudomonadati</taxon>
        <taxon>Pseudomonadota</taxon>
        <taxon>Gammaproteobacteria</taxon>
        <taxon>Enterobacterales</taxon>
        <taxon>Enterobacteriaceae</taxon>
        <taxon>Escherichia</taxon>
    </lineage>
</organism>
<comment type="function">
    <text evidence="1">Removes the pyruvyl group from chorismate, with concomitant aromatization of the ring, to provide 4-hydroxybenzoate (4HB) for the ubiquinone pathway.</text>
</comment>
<comment type="catalytic activity">
    <reaction evidence="1">
        <text>chorismate = 4-hydroxybenzoate + pyruvate</text>
        <dbReference type="Rhea" id="RHEA:16505"/>
        <dbReference type="ChEBI" id="CHEBI:15361"/>
        <dbReference type="ChEBI" id="CHEBI:17879"/>
        <dbReference type="ChEBI" id="CHEBI:29748"/>
        <dbReference type="EC" id="4.1.3.40"/>
    </reaction>
</comment>
<comment type="pathway">
    <text evidence="1">Cofactor biosynthesis; ubiquinone biosynthesis.</text>
</comment>
<comment type="subunit">
    <text evidence="1">Monomer.</text>
</comment>
<comment type="subcellular location">
    <subcellularLocation>
        <location evidence="1">Cytoplasm</location>
    </subcellularLocation>
</comment>
<comment type="similarity">
    <text evidence="1">Belongs to the UbiC family.</text>
</comment>
<feature type="chain" id="PRO_1000186519" description="Chorismate pyruvate-lyase">
    <location>
        <begin position="1"/>
        <end position="165"/>
    </location>
</feature>
<feature type="binding site" evidence="1">
    <location>
        <position position="35"/>
    </location>
    <ligand>
        <name>substrate</name>
    </ligand>
</feature>
<feature type="binding site" evidence="1">
    <location>
        <position position="77"/>
    </location>
    <ligand>
        <name>substrate</name>
    </ligand>
</feature>
<feature type="binding site" evidence="1">
    <location>
        <position position="115"/>
    </location>
    <ligand>
        <name>substrate</name>
    </ligand>
</feature>
<feature type="binding site" evidence="1">
    <location>
        <position position="156"/>
    </location>
    <ligand>
        <name>substrate</name>
    </ligand>
</feature>
<accession>B7LAY7</accession>
<sequence>MSHPALTQLRALRYFKEIPALEPQLLDWLLLEDSMTKRFEQQGKTVSVTMIREGFVEQNEIPEELPLLPKESRYWLREILLCADGEPWLAGRTVVPVSTLSGPELALQKLGKTPLGRYLFTSSTLTRDFIEIGRDAGLWGRRSRLRLSGKPLLLTELFLPASPLY</sequence>
<protein>
    <recommendedName>
        <fullName evidence="1">Chorismate pyruvate-lyase</fullName>
        <shortName evidence="1">CL</shortName>
        <shortName evidence="1">CPL</shortName>
        <ecNumber evidence="1">4.1.3.40</ecNumber>
    </recommendedName>
</protein>
<proteinExistence type="inferred from homology"/>
<name>UBIC_ECO55</name>
<gene>
    <name evidence="1" type="primary">ubiC</name>
    <name type="ordered locus">EC55989_4531</name>
</gene>
<reference key="1">
    <citation type="journal article" date="2009" name="PLoS Genet.">
        <title>Organised genome dynamics in the Escherichia coli species results in highly diverse adaptive paths.</title>
        <authorList>
            <person name="Touchon M."/>
            <person name="Hoede C."/>
            <person name="Tenaillon O."/>
            <person name="Barbe V."/>
            <person name="Baeriswyl S."/>
            <person name="Bidet P."/>
            <person name="Bingen E."/>
            <person name="Bonacorsi S."/>
            <person name="Bouchier C."/>
            <person name="Bouvet O."/>
            <person name="Calteau A."/>
            <person name="Chiapello H."/>
            <person name="Clermont O."/>
            <person name="Cruveiller S."/>
            <person name="Danchin A."/>
            <person name="Diard M."/>
            <person name="Dossat C."/>
            <person name="Karoui M.E."/>
            <person name="Frapy E."/>
            <person name="Garry L."/>
            <person name="Ghigo J.M."/>
            <person name="Gilles A.M."/>
            <person name="Johnson J."/>
            <person name="Le Bouguenec C."/>
            <person name="Lescat M."/>
            <person name="Mangenot S."/>
            <person name="Martinez-Jehanne V."/>
            <person name="Matic I."/>
            <person name="Nassif X."/>
            <person name="Oztas S."/>
            <person name="Petit M.A."/>
            <person name="Pichon C."/>
            <person name="Rouy Z."/>
            <person name="Ruf C.S."/>
            <person name="Schneider D."/>
            <person name="Tourret J."/>
            <person name="Vacherie B."/>
            <person name="Vallenet D."/>
            <person name="Medigue C."/>
            <person name="Rocha E.P.C."/>
            <person name="Denamur E."/>
        </authorList>
    </citation>
    <scope>NUCLEOTIDE SEQUENCE [LARGE SCALE GENOMIC DNA]</scope>
    <source>
        <strain>55989 / EAEC</strain>
    </source>
</reference>
<dbReference type="EC" id="4.1.3.40" evidence="1"/>
<dbReference type="EMBL" id="CU928145">
    <property type="protein sequence ID" value="CAV01321.1"/>
    <property type="molecule type" value="Genomic_DNA"/>
</dbReference>
<dbReference type="RefSeq" id="WP_001297295.1">
    <property type="nucleotide sequence ID" value="NC_011748.1"/>
</dbReference>
<dbReference type="SMR" id="B7LAY7"/>
<dbReference type="GeneID" id="75204183"/>
<dbReference type="KEGG" id="eck:EC55989_4531"/>
<dbReference type="HOGENOM" id="CLU_096824_1_0_6"/>
<dbReference type="UniPathway" id="UPA00232"/>
<dbReference type="Proteomes" id="UP000000746">
    <property type="component" value="Chromosome"/>
</dbReference>
<dbReference type="GO" id="GO:0005829">
    <property type="term" value="C:cytosol"/>
    <property type="evidence" value="ECO:0007669"/>
    <property type="project" value="TreeGrafter"/>
</dbReference>
<dbReference type="GO" id="GO:0008813">
    <property type="term" value="F:chorismate lyase activity"/>
    <property type="evidence" value="ECO:0007669"/>
    <property type="project" value="UniProtKB-UniRule"/>
</dbReference>
<dbReference type="GO" id="GO:0042866">
    <property type="term" value="P:pyruvate biosynthetic process"/>
    <property type="evidence" value="ECO:0007669"/>
    <property type="project" value="UniProtKB-UniRule"/>
</dbReference>
<dbReference type="GO" id="GO:0006744">
    <property type="term" value="P:ubiquinone biosynthetic process"/>
    <property type="evidence" value="ECO:0007669"/>
    <property type="project" value="UniProtKB-UniRule"/>
</dbReference>
<dbReference type="FunFam" id="3.40.1410.10:FF:000002">
    <property type="entry name" value="Chorismate pyruvate-lyase"/>
    <property type="match status" value="1"/>
</dbReference>
<dbReference type="Gene3D" id="3.40.1410.10">
    <property type="entry name" value="Chorismate lyase-like"/>
    <property type="match status" value="1"/>
</dbReference>
<dbReference type="HAMAP" id="MF_01632">
    <property type="entry name" value="UbiC"/>
    <property type="match status" value="1"/>
</dbReference>
<dbReference type="InterPro" id="IPR007440">
    <property type="entry name" value="Chorismate--pyruvate_lyase"/>
</dbReference>
<dbReference type="InterPro" id="IPR028978">
    <property type="entry name" value="Chorismate_lyase_/UTRA_dom_sf"/>
</dbReference>
<dbReference type="NCBIfam" id="NF008656">
    <property type="entry name" value="PRK11655.1"/>
    <property type="match status" value="1"/>
</dbReference>
<dbReference type="PANTHER" id="PTHR38683">
    <property type="entry name" value="CHORISMATE PYRUVATE-LYASE"/>
    <property type="match status" value="1"/>
</dbReference>
<dbReference type="PANTHER" id="PTHR38683:SF1">
    <property type="entry name" value="CHORISMATE PYRUVATE-LYASE"/>
    <property type="match status" value="1"/>
</dbReference>
<dbReference type="Pfam" id="PF04345">
    <property type="entry name" value="Chor_lyase"/>
    <property type="match status" value="1"/>
</dbReference>
<dbReference type="SUPFAM" id="SSF64288">
    <property type="entry name" value="Chorismate lyase-like"/>
    <property type="match status" value="1"/>
</dbReference>